<evidence type="ECO:0000255" key="1">
    <source>
        <dbReference type="HAMAP-Rule" id="MF_00503"/>
    </source>
</evidence>
<evidence type="ECO:0000305" key="2"/>
<proteinExistence type="inferred from homology"/>
<reference key="1">
    <citation type="book" date="2006" name="Gram positive pathogens, 2nd edition">
        <title>The Staphylococcus aureus NCTC 8325 genome.</title>
        <editorList>
            <person name="Fischetti V."/>
            <person name="Novick R."/>
            <person name="Ferretti J."/>
            <person name="Portnoy D."/>
            <person name="Rood J."/>
        </editorList>
        <authorList>
            <person name="Gillaspy A.F."/>
            <person name="Worrell V."/>
            <person name="Orvis J."/>
            <person name="Roe B.A."/>
            <person name="Dyer D.W."/>
            <person name="Iandolo J.J."/>
        </authorList>
    </citation>
    <scope>NUCLEOTIDE SEQUENCE [LARGE SCALE GENOMIC DNA]</scope>
    <source>
        <strain>NCTC 8325 / PS 47</strain>
    </source>
</reference>
<accession>Q2G2T3</accession>
<dbReference type="EMBL" id="CP000253">
    <property type="protein sequence ID" value="ABD29206.1"/>
    <property type="molecule type" value="Genomic_DNA"/>
</dbReference>
<dbReference type="RefSeq" id="WP_000864297.1">
    <property type="nucleotide sequence ID" value="NC_007795.1"/>
</dbReference>
<dbReference type="RefSeq" id="YP_498623.1">
    <property type="nucleotide sequence ID" value="NC_007795.1"/>
</dbReference>
<dbReference type="SMR" id="Q2G2T3"/>
<dbReference type="STRING" id="93061.SAOUHSC_00017"/>
<dbReference type="PaxDb" id="1280-SAXN108_0017"/>
<dbReference type="GeneID" id="3919188"/>
<dbReference type="KEGG" id="sao:SAOUHSC_00017"/>
<dbReference type="PATRIC" id="fig|93061.5.peg.15"/>
<dbReference type="eggNOG" id="COG0359">
    <property type="taxonomic scope" value="Bacteria"/>
</dbReference>
<dbReference type="HOGENOM" id="CLU_078938_3_2_9"/>
<dbReference type="OrthoDB" id="9788336at2"/>
<dbReference type="PRO" id="PR:Q2G2T3"/>
<dbReference type="Proteomes" id="UP000008816">
    <property type="component" value="Chromosome"/>
</dbReference>
<dbReference type="GO" id="GO:0022625">
    <property type="term" value="C:cytosolic large ribosomal subunit"/>
    <property type="evidence" value="ECO:0000318"/>
    <property type="project" value="GO_Central"/>
</dbReference>
<dbReference type="GO" id="GO:0019843">
    <property type="term" value="F:rRNA binding"/>
    <property type="evidence" value="ECO:0007669"/>
    <property type="project" value="UniProtKB-UniRule"/>
</dbReference>
<dbReference type="GO" id="GO:0003735">
    <property type="term" value="F:structural constituent of ribosome"/>
    <property type="evidence" value="ECO:0007669"/>
    <property type="project" value="InterPro"/>
</dbReference>
<dbReference type="GO" id="GO:0006412">
    <property type="term" value="P:translation"/>
    <property type="evidence" value="ECO:0007669"/>
    <property type="project" value="UniProtKB-UniRule"/>
</dbReference>
<dbReference type="FunFam" id="3.10.430.100:FF:000002">
    <property type="entry name" value="50S ribosomal protein L9"/>
    <property type="match status" value="1"/>
</dbReference>
<dbReference type="FunFam" id="3.40.5.10:FF:000002">
    <property type="entry name" value="50S ribosomal protein L9"/>
    <property type="match status" value="1"/>
</dbReference>
<dbReference type="Gene3D" id="3.10.430.100">
    <property type="entry name" value="Ribosomal protein L9, C-terminal domain"/>
    <property type="match status" value="1"/>
</dbReference>
<dbReference type="Gene3D" id="3.40.5.10">
    <property type="entry name" value="Ribosomal protein L9, N-terminal domain"/>
    <property type="match status" value="1"/>
</dbReference>
<dbReference type="HAMAP" id="MF_00503">
    <property type="entry name" value="Ribosomal_bL9"/>
    <property type="match status" value="1"/>
</dbReference>
<dbReference type="InterPro" id="IPR000244">
    <property type="entry name" value="Ribosomal_bL9"/>
</dbReference>
<dbReference type="InterPro" id="IPR009027">
    <property type="entry name" value="Ribosomal_bL9/RNase_H1_N"/>
</dbReference>
<dbReference type="InterPro" id="IPR020594">
    <property type="entry name" value="Ribosomal_bL9_bac/chp"/>
</dbReference>
<dbReference type="InterPro" id="IPR020069">
    <property type="entry name" value="Ribosomal_bL9_C"/>
</dbReference>
<dbReference type="InterPro" id="IPR036791">
    <property type="entry name" value="Ribosomal_bL9_C_sf"/>
</dbReference>
<dbReference type="InterPro" id="IPR020070">
    <property type="entry name" value="Ribosomal_bL9_N"/>
</dbReference>
<dbReference type="InterPro" id="IPR036935">
    <property type="entry name" value="Ribosomal_bL9_N_sf"/>
</dbReference>
<dbReference type="NCBIfam" id="TIGR00158">
    <property type="entry name" value="L9"/>
    <property type="match status" value="1"/>
</dbReference>
<dbReference type="PANTHER" id="PTHR21368">
    <property type="entry name" value="50S RIBOSOMAL PROTEIN L9"/>
    <property type="match status" value="1"/>
</dbReference>
<dbReference type="Pfam" id="PF03948">
    <property type="entry name" value="Ribosomal_L9_C"/>
    <property type="match status" value="1"/>
</dbReference>
<dbReference type="Pfam" id="PF01281">
    <property type="entry name" value="Ribosomal_L9_N"/>
    <property type="match status" value="1"/>
</dbReference>
<dbReference type="SUPFAM" id="SSF55658">
    <property type="entry name" value="L9 N-domain-like"/>
    <property type="match status" value="1"/>
</dbReference>
<dbReference type="SUPFAM" id="SSF55653">
    <property type="entry name" value="Ribosomal protein L9 C-domain"/>
    <property type="match status" value="1"/>
</dbReference>
<dbReference type="PROSITE" id="PS00651">
    <property type="entry name" value="RIBOSOMAL_L9"/>
    <property type="match status" value="1"/>
</dbReference>
<protein>
    <recommendedName>
        <fullName evidence="1">Large ribosomal subunit protein bL9</fullName>
    </recommendedName>
    <alternativeName>
        <fullName evidence="2">50S ribosomal protein L9</fullName>
    </alternativeName>
</protein>
<keyword id="KW-1185">Reference proteome</keyword>
<keyword id="KW-0687">Ribonucleoprotein</keyword>
<keyword id="KW-0689">Ribosomal protein</keyword>
<keyword id="KW-0694">RNA-binding</keyword>
<keyword id="KW-0699">rRNA-binding</keyword>
<comment type="function">
    <text evidence="1">Binds to the 23S rRNA.</text>
</comment>
<comment type="similarity">
    <text evidence="1">Belongs to the bacterial ribosomal protein bL9 family.</text>
</comment>
<feature type="chain" id="PRO_0000258491" description="Large ribosomal subunit protein bL9">
    <location>
        <begin position="1"/>
        <end position="150"/>
    </location>
</feature>
<name>RL9_STAA8</name>
<organism>
    <name type="scientific">Staphylococcus aureus (strain NCTC 8325 / PS 47)</name>
    <dbReference type="NCBI Taxonomy" id="93061"/>
    <lineage>
        <taxon>Bacteria</taxon>
        <taxon>Bacillati</taxon>
        <taxon>Bacillota</taxon>
        <taxon>Bacilli</taxon>
        <taxon>Bacillales</taxon>
        <taxon>Staphylococcaceae</taxon>
        <taxon>Staphylococcus</taxon>
    </lineage>
</organism>
<sequence length="150" mass="16639">MKVIFTQDVKGKGKGKKGEVKEVPVGYANNFLLKKNYAVEATPGNLKQLELQKKRAKQERQQEIEDAKALKETLSNIEVEVSAKTGEGGKLFGSVSTKQIAEALKAQHDIKIDKRKMDLPNGIHSLGYTNVPVKLDKEVEGTIRVHTVEQ</sequence>
<gene>
    <name evidence="1" type="primary">rplI</name>
    <name type="ordered locus">SAOUHSC_00017</name>
</gene>